<feature type="chain" id="PRO_0000103680" description="Uncharacterized protein ML2452">
    <location>
        <begin position="1"/>
        <end position="123"/>
    </location>
</feature>
<evidence type="ECO:0000305" key="1"/>
<accession>Q9CB44</accession>
<name>Y2452_MYCLE</name>
<gene>
    <name type="ordered locus">ML2452</name>
</gene>
<dbReference type="EMBL" id="AL583925">
    <property type="protein sequence ID" value="CAC31969.1"/>
    <property type="molecule type" value="Genomic_DNA"/>
</dbReference>
<dbReference type="PIR" id="A87216">
    <property type="entry name" value="A87216"/>
</dbReference>
<dbReference type="RefSeq" id="NP_302590.1">
    <property type="nucleotide sequence ID" value="NC_002677.1"/>
</dbReference>
<dbReference type="RefSeq" id="WP_010908909.1">
    <property type="nucleotide sequence ID" value="NC_002677.1"/>
</dbReference>
<dbReference type="STRING" id="272631.gene:17576315"/>
<dbReference type="KEGG" id="mle:ML2452"/>
<dbReference type="PATRIC" id="fig|272631.5.peg.4706"/>
<dbReference type="Leproma" id="ML2452"/>
<dbReference type="eggNOG" id="ENOG5033526">
    <property type="taxonomic scope" value="Bacteria"/>
</dbReference>
<dbReference type="HOGENOM" id="CLU_127583_1_0_11"/>
<dbReference type="OrthoDB" id="4412570at2"/>
<dbReference type="Proteomes" id="UP000000806">
    <property type="component" value="Chromosome"/>
</dbReference>
<dbReference type="InterPro" id="IPR019719">
    <property type="entry name" value="DUF2599"/>
</dbReference>
<dbReference type="Pfam" id="PF10783">
    <property type="entry name" value="DUF2599"/>
    <property type="match status" value="1"/>
</dbReference>
<keyword id="KW-1185">Reference proteome</keyword>
<reference key="1">
    <citation type="journal article" date="2001" name="Nature">
        <title>Massive gene decay in the leprosy bacillus.</title>
        <authorList>
            <person name="Cole S.T."/>
            <person name="Eiglmeier K."/>
            <person name="Parkhill J."/>
            <person name="James K.D."/>
            <person name="Thomson N.R."/>
            <person name="Wheeler P.R."/>
            <person name="Honore N."/>
            <person name="Garnier T."/>
            <person name="Churcher C.M."/>
            <person name="Harris D.E."/>
            <person name="Mungall K.L."/>
            <person name="Basham D."/>
            <person name="Brown D."/>
            <person name="Chillingworth T."/>
            <person name="Connor R."/>
            <person name="Davies R.M."/>
            <person name="Devlin K."/>
            <person name="Duthoy S."/>
            <person name="Feltwell T."/>
            <person name="Fraser A."/>
            <person name="Hamlin N."/>
            <person name="Holroyd S."/>
            <person name="Hornsby T."/>
            <person name="Jagels K."/>
            <person name="Lacroix C."/>
            <person name="Maclean J."/>
            <person name="Moule S."/>
            <person name="Murphy L.D."/>
            <person name="Oliver K."/>
            <person name="Quail M.A."/>
            <person name="Rajandream M.A."/>
            <person name="Rutherford K.M."/>
            <person name="Rutter S."/>
            <person name="Seeger K."/>
            <person name="Simon S."/>
            <person name="Simmonds M."/>
            <person name="Skelton J."/>
            <person name="Squares R."/>
            <person name="Squares S."/>
            <person name="Stevens K."/>
            <person name="Taylor K."/>
            <person name="Whitehead S."/>
            <person name="Woodward J.R."/>
            <person name="Barrell B.G."/>
        </authorList>
    </citation>
    <scope>NUCLEOTIDE SEQUENCE [LARGE SCALE GENOMIC DNA]</scope>
    <source>
        <strain>TN</strain>
    </source>
</reference>
<protein>
    <recommendedName>
        <fullName>Uncharacterized protein ML2452</fullName>
    </recommendedName>
</protein>
<sequence>MSSPLSPLYVLPFVDHTKWTRWRSLISLQAYSNLFGRTSAMQPDVAAGDEAWGDVLTLSPDADTADMHAQFICHGQFAEFVQPSNTSSNLEPWRPVVDDSEIFAAGCHPGISEGIQQADEGPR</sequence>
<organism>
    <name type="scientific">Mycobacterium leprae (strain TN)</name>
    <dbReference type="NCBI Taxonomy" id="272631"/>
    <lineage>
        <taxon>Bacteria</taxon>
        <taxon>Bacillati</taxon>
        <taxon>Actinomycetota</taxon>
        <taxon>Actinomycetes</taxon>
        <taxon>Mycobacteriales</taxon>
        <taxon>Mycobacteriaceae</taxon>
        <taxon>Mycobacterium</taxon>
    </lineage>
</organism>
<comment type="similarity">
    <text evidence="1">To M.tuberculosis Rv0477.</text>
</comment>
<proteinExistence type="predicted"/>